<organism>
    <name type="scientific">Brucella abortus biovar 1 (strain 9-941)</name>
    <dbReference type="NCBI Taxonomy" id="262698"/>
    <lineage>
        <taxon>Bacteria</taxon>
        <taxon>Pseudomonadati</taxon>
        <taxon>Pseudomonadota</taxon>
        <taxon>Alphaproteobacteria</taxon>
        <taxon>Hyphomicrobiales</taxon>
        <taxon>Brucellaceae</taxon>
        <taxon>Brucella/Ochrobactrum group</taxon>
        <taxon>Brucella</taxon>
    </lineage>
</organism>
<name>LEPA_BRUAB</name>
<reference key="1">
    <citation type="journal article" date="2005" name="J. Bacteriol.">
        <title>Completion of the genome sequence of Brucella abortus and comparison to the highly similar genomes of Brucella melitensis and Brucella suis.</title>
        <authorList>
            <person name="Halling S.M."/>
            <person name="Peterson-Burch B.D."/>
            <person name="Bricker B.J."/>
            <person name="Zuerner R.L."/>
            <person name="Qing Z."/>
            <person name="Li L.-L."/>
            <person name="Kapur V."/>
            <person name="Alt D.P."/>
            <person name="Olsen S.C."/>
        </authorList>
    </citation>
    <scope>NUCLEOTIDE SEQUENCE [LARGE SCALE GENOMIC DNA]</scope>
    <source>
        <strain>9-941</strain>
    </source>
</reference>
<comment type="function">
    <text evidence="1">Required for accurate and efficient protein synthesis under certain stress conditions. May act as a fidelity factor of the translation reaction, by catalyzing a one-codon backward translocation of tRNAs on improperly translocated ribosomes. Back-translocation proceeds from a post-translocation (POST) complex to a pre-translocation (PRE) complex, thus giving elongation factor G a second chance to translocate the tRNAs correctly. Binds to ribosomes in a GTP-dependent manner.</text>
</comment>
<comment type="catalytic activity">
    <reaction evidence="1">
        <text>GTP + H2O = GDP + phosphate + H(+)</text>
        <dbReference type="Rhea" id="RHEA:19669"/>
        <dbReference type="ChEBI" id="CHEBI:15377"/>
        <dbReference type="ChEBI" id="CHEBI:15378"/>
        <dbReference type="ChEBI" id="CHEBI:37565"/>
        <dbReference type="ChEBI" id="CHEBI:43474"/>
        <dbReference type="ChEBI" id="CHEBI:58189"/>
        <dbReference type="EC" id="3.6.5.n1"/>
    </reaction>
</comment>
<comment type="subcellular location">
    <subcellularLocation>
        <location evidence="1">Cell inner membrane</location>
        <topology evidence="1">Peripheral membrane protein</topology>
        <orientation evidence="1">Cytoplasmic side</orientation>
    </subcellularLocation>
</comment>
<comment type="similarity">
    <text evidence="1">Belongs to the TRAFAC class translation factor GTPase superfamily. Classic translation factor GTPase family. LepA subfamily.</text>
</comment>
<gene>
    <name evidence="1" type="primary">lepA</name>
    <name type="ordered locus">BruAb2_0979</name>
</gene>
<protein>
    <recommendedName>
        <fullName evidence="1">Elongation factor 4</fullName>
        <shortName evidence="1">EF-4</shortName>
        <ecNumber evidence="1">3.6.5.n1</ecNumber>
    </recommendedName>
    <alternativeName>
        <fullName evidence="1">Ribosomal back-translocase LepA</fullName>
    </alternativeName>
</protein>
<dbReference type="EC" id="3.6.5.n1" evidence="1"/>
<dbReference type="EMBL" id="AE017224">
    <property type="protein sequence ID" value="AAX76359.1"/>
    <property type="molecule type" value="Genomic_DNA"/>
</dbReference>
<dbReference type="RefSeq" id="WP_002967379.1">
    <property type="nucleotide sequence ID" value="NC_006933.1"/>
</dbReference>
<dbReference type="SMR" id="Q576S5"/>
<dbReference type="EnsemblBacteria" id="AAX76359">
    <property type="protein sequence ID" value="AAX76359"/>
    <property type="gene ID" value="BruAb2_0979"/>
</dbReference>
<dbReference type="GeneID" id="93015178"/>
<dbReference type="KEGG" id="bmb:BruAb2_0979"/>
<dbReference type="HOGENOM" id="CLU_009995_3_3_5"/>
<dbReference type="Proteomes" id="UP000000540">
    <property type="component" value="Chromosome II"/>
</dbReference>
<dbReference type="GO" id="GO:0005886">
    <property type="term" value="C:plasma membrane"/>
    <property type="evidence" value="ECO:0007669"/>
    <property type="project" value="UniProtKB-SubCell"/>
</dbReference>
<dbReference type="GO" id="GO:0005525">
    <property type="term" value="F:GTP binding"/>
    <property type="evidence" value="ECO:0007669"/>
    <property type="project" value="UniProtKB-UniRule"/>
</dbReference>
<dbReference type="GO" id="GO:0003924">
    <property type="term" value="F:GTPase activity"/>
    <property type="evidence" value="ECO:0007669"/>
    <property type="project" value="UniProtKB-UniRule"/>
</dbReference>
<dbReference type="GO" id="GO:0097216">
    <property type="term" value="F:guanosine tetraphosphate binding"/>
    <property type="evidence" value="ECO:0007669"/>
    <property type="project" value="UniProtKB-ARBA"/>
</dbReference>
<dbReference type="GO" id="GO:0043022">
    <property type="term" value="F:ribosome binding"/>
    <property type="evidence" value="ECO:0007669"/>
    <property type="project" value="UniProtKB-UniRule"/>
</dbReference>
<dbReference type="GO" id="GO:0003746">
    <property type="term" value="F:translation elongation factor activity"/>
    <property type="evidence" value="ECO:0007669"/>
    <property type="project" value="UniProtKB-UniRule"/>
</dbReference>
<dbReference type="GO" id="GO:0045727">
    <property type="term" value="P:positive regulation of translation"/>
    <property type="evidence" value="ECO:0007669"/>
    <property type="project" value="UniProtKB-UniRule"/>
</dbReference>
<dbReference type="CDD" id="cd03699">
    <property type="entry name" value="EF4_II"/>
    <property type="match status" value="1"/>
</dbReference>
<dbReference type="CDD" id="cd16260">
    <property type="entry name" value="EF4_III"/>
    <property type="match status" value="1"/>
</dbReference>
<dbReference type="CDD" id="cd01890">
    <property type="entry name" value="LepA"/>
    <property type="match status" value="1"/>
</dbReference>
<dbReference type="CDD" id="cd03709">
    <property type="entry name" value="lepA_C"/>
    <property type="match status" value="1"/>
</dbReference>
<dbReference type="FunFam" id="3.40.50.300:FF:000078">
    <property type="entry name" value="Elongation factor 4"/>
    <property type="match status" value="1"/>
</dbReference>
<dbReference type="FunFam" id="2.40.30.10:FF:000015">
    <property type="entry name" value="Translation factor GUF1, mitochondrial"/>
    <property type="match status" value="1"/>
</dbReference>
<dbReference type="FunFam" id="3.30.70.240:FF:000007">
    <property type="entry name" value="Translation factor GUF1, mitochondrial"/>
    <property type="match status" value="1"/>
</dbReference>
<dbReference type="FunFam" id="3.30.70.2570:FF:000001">
    <property type="entry name" value="Translation factor GUF1, mitochondrial"/>
    <property type="match status" value="1"/>
</dbReference>
<dbReference type="FunFam" id="3.30.70.870:FF:000004">
    <property type="entry name" value="Translation factor GUF1, mitochondrial"/>
    <property type="match status" value="1"/>
</dbReference>
<dbReference type="Gene3D" id="3.30.70.240">
    <property type="match status" value="1"/>
</dbReference>
<dbReference type="Gene3D" id="3.30.70.2570">
    <property type="entry name" value="Elongation factor 4, C-terminal domain"/>
    <property type="match status" value="1"/>
</dbReference>
<dbReference type="Gene3D" id="3.30.70.870">
    <property type="entry name" value="Elongation Factor G (Translational Gtpase), domain 3"/>
    <property type="match status" value="1"/>
</dbReference>
<dbReference type="Gene3D" id="3.40.50.300">
    <property type="entry name" value="P-loop containing nucleotide triphosphate hydrolases"/>
    <property type="match status" value="1"/>
</dbReference>
<dbReference type="Gene3D" id="2.40.30.10">
    <property type="entry name" value="Translation factors"/>
    <property type="match status" value="1"/>
</dbReference>
<dbReference type="HAMAP" id="MF_00071">
    <property type="entry name" value="LepA"/>
    <property type="match status" value="1"/>
</dbReference>
<dbReference type="InterPro" id="IPR006297">
    <property type="entry name" value="EF-4"/>
</dbReference>
<dbReference type="InterPro" id="IPR035647">
    <property type="entry name" value="EFG_III/V"/>
</dbReference>
<dbReference type="InterPro" id="IPR000640">
    <property type="entry name" value="EFG_V-like"/>
</dbReference>
<dbReference type="InterPro" id="IPR004161">
    <property type="entry name" value="EFTu-like_2"/>
</dbReference>
<dbReference type="InterPro" id="IPR031157">
    <property type="entry name" value="G_TR_CS"/>
</dbReference>
<dbReference type="InterPro" id="IPR038363">
    <property type="entry name" value="LepA_C_sf"/>
</dbReference>
<dbReference type="InterPro" id="IPR013842">
    <property type="entry name" value="LepA_CTD"/>
</dbReference>
<dbReference type="InterPro" id="IPR035654">
    <property type="entry name" value="LepA_IV"/>
</dbReference>
<dbReference type="InterPro" id="IPR027417">
    <property type="entry name" value="P-loop_NTPase"/>
</dbReference>
<dbReference type="InterPro" id="IPR005225">
    <property type="entry name" value="Small_GTP-bd"/>
</dbReference>
<dbReference type="InterPro" id="IPR000795">
    <property type="entry name" value="T_Tr_GTP-bd_dom"/>
</dbReference>
<dbReference type="NCBIfam" id="TIGR01393">
    <property type="entry name" value="lepA"/>
    <property type="match status" value="1"/>
</dbReference>
<dbReference type="NCBIfam" id="TIGR00231">
    <property type="entry name" value="small_GTP"/>
    <property type="match status" value="1"/>
</dbReference>
<dbReference type="PANTHER" id="PTHR43512:SF4">
    <property type="entry name" value="TRANSLATION FACTOR GUF1 HOMOLOG, CHLOROPLASTIC"/>
    <property type="match status" value="1"/>
</dbReference>
<dbReference type="PANTHER" id="PTHR43512">
    <property type="entry name" value="TRANSLATION FACTOR GUF1-RELATED"/>
    <property type="match status" value="1"/>
</dbReference>
<dbReference type="Pfam" id="PF00679">
    <property type="entry name" value="EFG_C"/>
    <property type="match status" value="1"/>
</dbReference>
<dbReference type="Pfam" id="PF00009">
    <property type="entry name" value="GTP_EFTU"/>
    <property type="match status" value="1"/>
</dbReference>
<dbReference type="Pfam" id="PF03144">
    <property type="entry name" value="GTP_EFTU_D2"/>
    <property type="match status" value="1"/>
</dbReference>
<dbReference type="Pfam" id="PF06421">
    <property type="entry name" value="LepA_C"/>
    <property type="match status" value="1"/>
</dbReference>
<dbReference type="PRINTS" id="PR00315">
    <property type="entry name" value="ELONGATNFCT"/>
</dbReference>
<dbReference type="SMART" id="SM00838">
    <property type="entry name" value="EFG_C"/>
    <property type="match status" value="1"/>
</dbReference>
<dbReference type="SUPFAM" id="SSF54980">
    <property type="entry name" value="EF-G C-terminal domain-like"/>
    <property type="match status" value="2"/>
</dbReference>
<dbReference type="SUPFAM" id="SSF52540">
    <property type="entry name" value="P-loop containing nucleoside triphosphate hydrolases"/>
    <property type="match status" value="1"/>
</dbReference>
<dbReference type="PROSITE" id="PS00301">
    <property type="entry name" value="G_TR_1"/>
    <property type="match status" value="1"/>
</dbReference>
<dbReference type="PROSITE" id="PS51722">
    <property type="entry name" value="G_TR_2"/>
    <property type="match status" value="1"/>
</dbReference>
<proteinExistence type="inferred from homology"/>
<keyword id="KW-0997">Cell inner membrane</keyword>
<keyword id="KW-1003">Cell membrane</keyword>
<keyword id="KW-0342">GTP-binding</keyword>
<keyword id="KW-0378">Hydrolase</keyword>
<keyword id="KW-0472">Membrane</keyword>
<keyword id="KW-0547">Nucleotide-binding</keyword>
<keyword id="KW-0648">Protein biosynthesis</keyword>
<feature type="chain" id="PRO_0000224746" description="Elongation factor 4">
    <location>
        <begin position="1"/>
        <end position="602"/>
    </location>
</feature>
<feature type="domain" description="tr-type G">
    <location>
        <begin position="6"/>
        <end position="188"/>
    </location>
</feature>
<feature type="binding site" evidence="1">
    <location>
        <begin position="18"/>
        <end position="23"/>
    </location>
    <ligand>
        <name>GTP</name>
        <dbReference type="ChEBI" id="CHEBI:37565"/>
    </ligand>
</feature>
<feature type="binding site" evidence="1">
    <location>
        <begin position="135"/>
        <end position="138"/>
    </location>
    <ligand>
        <name>GTP</name>
        <dbReference type="ChEBI" id="CHEBI:37565"/>
    </ligand>
</feature>
<evidence type="ECO:0000255" key="1">
    <source>
        <dbReference type="HAMAP-Rule" id="MF_00071"/>
    </source>
</evidence>
<sequence>MSTPLDHIRNFSIVAHIDHGKSTLADRLIQLTGGLDTREMKDQVLDSMDIERERGITIKAQTVRLSYKAKNGEDYVLNLIDTPGHVDFAYEVSRSLAACEGSLLVVDASQGVEAQTLANVYQAIDNNHEIVVVLNKIDLPAAEPERVKQQIEEVIGIDASDAVEISAKTGLGIEDVLEAIVNKLPAPKEGDRNAPLKAMLVDSWYDSYLGVIVLVRVIDGVLKKGQTIRMMGTGAKYPVERTGVFTPKMVQVDDLGPGELGFITASIKEVADTRVGDTITEDRRPTENILSGFKPAQPVVFCGLFPVDAADFEDLRGAMGKLRLNDASFSFEMETSAALGFGFRCGFLGLLHLEIIQERLEREFNLDLITTAPSVVYRLNMTDGTHKELHNPADMPDVVKIASIEEPWIKATIMTPDDYLGAIMKLCQERRGIQIDLTYVGPRAMITYDLPLNEVVFDFYDRLKSISKGYASFDYNLSDYREGDLVKMSILVNEEPVDALSMLVHRSAAEKRGRALCEKLKELIPQHMFKIPIQAAIGGRIVARETISALRKDVTAKCYGGDVTRKRKLLEKQKESKKRMRQFGKVEIPQEAFIQALKMGDD</sequence>
<accession>Q576S5</accession>